<sequence>MQDIKTYLSTAPVLATLWFSSLAGLLIEINRFFPDALTFPFFSF</sequence>
<reference key="1">
    <citation type="journal article" date="2008" name="BMC Evol. Biol.">
        <title>The complete plastid genome sequence of Welwitschia mirabilis: an unusually compact plastome with accelerated divergence rates.</title>
        <authorList>
            <person name="McCoy S.R."/>
            <person name="Kuehl J.V."/>
            <person name="Boore J.L."/>
            <person name="Raubeson L.A."/>
        </authorList>
    </citation>
    <scope>NUCLEOTIDE SEQUENCE [LARGE SCALE GENOMIC DNA]</scope>
</reference>
<reference key="2">
    <citation type="journal article" date="2009" name="Mol. Phylogenet. Evol.">
        <title>Evolution of reduced and compact chloroplast genomes (cpDNAs) in gnetophytes: Selection toward a lower-cost strategy.</title>
        <authorList>
            <person name="Wu C.-S."/>
            <person name="Lai Y.-T."/>
            <person name="Lin C.-P."/>
            <person name="Wang Y.-N."/>
            <person name="Chaw S.-M."/>
        </authorList>
    </citation>
    <scope>NUCLEOTIDE SEQUENCE [LARGE SCALE GENOMIC DNA]</scope>
</reference>
<protein>
    <recommendedName>
        <fullName evidence="1">Photosystem I reaction center subunit IX</fullName>
    </recommendedName>
    <alternativeName>
        <fullName evidence="1">PSI-J</fullName>
    </alternativeName>
</protein>
<geneLocation type="chloroplast"/>
<comment type="function">
    <text evidence="1">May help in the organization of the PsaE and PsaF subunits.</text>
</comment>
<comment type="subcellular location">
    <subcellularLocation>
        <location evidence="1">Plastid</location>
        <location evidence="1">Chloroplast thylakoid membrane</location>
        <topology evidence="1">Single-pass membrane protein</topology>
    </subcellularLocation>
</comment>
<comment type="similarity">
    <text evidence="1">Belongs to the PsaJ family.</text>
</comment>
<proteinExistence type="inferred from homology"/>
<evidence type="ECO:0000255" key="1">
    <source>
        <dbReference type="HAMAP-Rule" id="MF_00522"/>
    </source>
</evidence>
<gene>
    <name evidence="1" type="primary">psaJ</name>
</gene>
<keyword id="KW-0150">Chloroplast</keyword>
<keyword id="KW-0472">Membrane</keyword>
<keyword id="KW-0602">Photosynthesis</keyword>
<keyword id="KW-0603">Photosystem I</keyword>
<keyword id="KW-0934">Plastid</keyword>
<keyword id="KW-0793">Thylakoid</keyword>
<keyword id="KW-0812">Transmembrane</keyword>
<keyword id="KW-1133">Transmembrane helix</keyword>
<dbReference type="EMBL" id="EU342371">
    <property type="protein sequence ID" value="ABY26809.1"/>
    <property type="molecule type" value="Genomic_DNA"/>
</dbReference>
<dbReference type="EMBL" id="AP009568">
    <property type="protein sequence ID" value="BAH11209.1"/>
    <property type="molecule type" value="Genomic_DNA"/>
</dbReference>
<dbReference type="RefSeq" id="YP_001876596.1">
    <property type="nucleotide sequence ID" value="NC_010654.1"/>
</dbReference>
<dbReference type="SMR" id="B2Y1X9"/>
<dbReference type="GeneID" id="6276260"/>
<dbReference type="GO" id="GO:0009535">
    <property type="term" value="C:chloroplast thylakoid membrane"/>
    <property type="evidence" value="ECO:0007669"/>
    <property type="project" value="UniProtKB-SubCell"/>
</dbReference>
<dbReference type="GO" id="GO:0009522">
    <property type="term" value="C:photosystem I"/>
    <property type="evidence" value="ECO:0007669"/>
    <property type="project" value="UniProtKB-KW"/>
</dbReference>
<dbReference type="GO" id="GO:0015979">
    <property type="term" value="P:photosynthesis"/>
    <property type="evidence" value="ECO:0007669"/>
    <property type="project" value="UniProtKB-UniRule"/>
</dbReference>
<dbReference type="FunFam" id="1.20.5.510:FF:000001">
    <property type="entry name" value="Photosystem I reaction center subunit IX"/>
    <property type="match status" value="1"/>
</dbReference>
<dbReference type="Gene3D" id="1.20.5.510">
    <property type="entry name" value="Single helix bin"/>
    <property type="match status" value="1"/>
</dbReference>
<dbReference type="HAMAP" id="MF_00522">
    <property type="entry name" value="PSI_PsaJ"/>
    <property type="match status" value="1"/>
</dbReference>
<dbReference type="InterPro" id="IPR002615">
    <property type="entry name" value="PSI_PsaJ"/>
</dbReference>
<dbReference type="InterPro" id="IPR036062">
    <property type="entry name" value="PSI_PsaJ_sf"/>
</dbReference>
<dbReference type="PANTHER" id="PTHR36082">
    <property type="match status" value="1"/>
</dbReference>
<dbReference type="PANTHER" id="PTHR36082:SF2">
    <property type="entry name" value="PHOTOSYSTEM I REACTION CENTER SUBUNIT IX"/>
    <property type="match status" value="1"/>
</dbReference>
<dbReference type="Pfam" id="PF01701">
    <property type="entry name" value="PSI_PsaJ"/>
    <property type="match status" value="1"/>
</dbReference>
<dbReference type="SUPFAM" id="SSF81544">
    <property type="entry name" value="Subunit IX of photosystem I reaction centre, PsaJ"/>
    <property type="match status" value="1"/>
</dbReference>
<organism>
    <name type="scientific">Welwitschia mirabilis</name>
    <name type="common">Tree tumbo</name>
    <name type="synonym">Welwitschia bainesii</name>
    <dbReference type="NCBI Taxonomy" id="3377"/>
    <lineage>
        <taxon>Eukaryota</taxon>
        <taxon>Viridiplantae</taxon>
        <taxon>Streptophyta</taxon>
        <taxon>Embryophyta</taxon>
        <taxon>Tracheophyta</taxon>
        <taxon>Spermatophyta</taxon>
        <taxon>Gnetopsida</taxon>
        <taxon>Gnetidae</taxon>
        <taxon>Welwitschiales</taxon>
        <taxon>Welwitschiaceae</taxon>
        <taxon>Welwitschia</taxon>
    </lineage>
</organism>
<accession>B2Y1X9</accession>
<accession>B7ZI29</accession>
<name>PSAJ_WELMI</name>
<feature type="chain" id="PRO_0000354170" description="Photosystem I reaction center subunit IX">
    <location>
        <begin position="1"/>
        <end position="44"/>
    </location>
</feature>
<feature type="transmembrane region" description="Helical" evidence="1">
    <location>
        <begin position="7"/>
        <end position="27"/>
    </location>
</feature>